<gene>
    <name evidence="1" type="primary">ndhH</name>
</gene>
<proteinExistence type="inferred from homology"/>
<feature type="chain" id="PRO_0000358010" description="NAD(P)H-quinone oxidoreductase subunit H, chloroplastic">
    <location>
        <begin position="1"/>
        <end position="393"/>
    </location>
</feature>
<reference key="1">
    <citation type="journal article" date="2007" name="BMC Genomics">
        <title>Comparative chloroplast genomics: analyses including new sequences from the angiosperms Nuphar advena and Ranunculus macranthus.</title>
        <authorList>
            <person name="Raubeson L.A."/>
            <person name="Peery R."/>
            <person name="Chumley T.W."/>
            <person name="Dziubek C."/>
            <person name="Fourcade H.M."/>
            <person name="Boore J.L."/>
            <person name="Jansen R.K."/>
        </authorList>
    </citation>
    <scope>NUCLEOTIDE SEQUENCE [LARGE SCALE GENOMIC DNA]</scope>
</reference>
<evidence type="ECO:0000255" key="1">
    <source>
        <dbReference type="HAMAP-Rule" id="MF_01358"/>
    </source>
</evidence>
<protein>
    <recommendedName>
        <fullName evidence="1">NAD(P)H-quinone oxidoreductase subunit H, chloroplastic</fullName>
        <ecNumber evidence="1">7.1.1.-</ecNumber>
    </recommendedName>
    <alternativeName>
        <fullName>NAD(P)H dehydrogenase subunit H</fullName>
    </alternativeName>
    <alternativeName>
        <fullName evidence="1">NADH-plastoquinone oxidoreductase 49 kDa subunit</fullName>
    </alternativeName>
    <alternativeName>
        <fullName evidence="1">NADH-plastoquinone oxidoreductase subunit H</fullName>
    </alternativeName>
</protein>
<sequence>MTVPDARKDLLVVNMGPHHPSMHGVLRLIVTLDGEDVIDCEPILGYLHRGMEKIAENRTIIQYLPYVTRWDYLATMFTEAITVNAPEELGNIQVPKRASYIRVIMLELSRIASHLLWLGPFMADIGAQTPFFYIFRERELLYDLFEAATGMRMMHNYFRIGGVAADLPHGWIDKCLDFCDYFLTGVVEYQKLITRNPIFLERVEGVGFIGGEEAINWGLSGPMLRASGIQWDLRKVDRYECYDEFDWEVQWQKEGDSLARYLVRIGEMTESIKIIQQALEGIPGGPYENLEFRRFAGTKDSELNDFEYRFISKKPSPSFELSKQELYVRVEAPKGELGIFLIGDNSVFPWRWKIRPPGFINLQILPQLVKRMKLADIMTILGSIDIIMGEVDR</sequence>
<name>NDHH_NUPAD</name>
<comment type="function">
    <text evidence="1">NDH shuttles electrons from NAD(P)H:plastoquinone, via FMN and iron-sulfur (Fe-S) centers, to quinones in the photosynthetic chain and possibly in a chloroplast respiratory chain. The immediate electron acceptor for the enzyme in this species is believed to be plastoquinone. Couples the redox reaction to proton translocation, and thus conserves the redox energy in a proton gradient.</text>
</comment>
<comment type="catalytic activity">
    <reaction evidence="1">
        <text>a plastoquinone + NADH + (n+1) H(+)(in) = a plastoquinol + NAD(+) + n H(+)(out)</text>
        <dbReference type="Rhea" id="RHEA:42608"/>
        <dbReference type="Rhea" id="RHEA-COMP:9561"/>
        <dbReference type="Rhea" id="RHEA-COMP:9562"/>
        <dbReference type="ChEBI" id="CHEBI:15378"/>
        <dbReference type="ChEBI" id="CHEBI:17757"/>
        <dbReference type="ChEBI" id="CHEBI:57540"/>
        <dbReference type="ChEBI" id="CHEBI:57945"/>
        <dbReference type="ChEBI" id="CHEBI:62192"/>
    </reaction>
</comment>
<comment type="catalytic activity">
    <reaction evidence="1">
        <text>a plastoquinone + NADPH + (n+1) H(+)(in) = a plastoquinol + NADP(+) + n H(+)(out)</text>
        <dbReference type="Rhea" id="RHEA:42612"/>
        <dbReference type="Rhea" id="RHEA-COMP:9561"/>
        <dbReference type="Rhea" id="RHEA-COMP:9562"/>
        <dbReference type="ChEBI" id="CHEBI:15378"/>
        <dbReference type="ChEBI" id="CHEBI:17757"/>
        <dbReference type="ChEBI" id="CHEBI:57783"/>
        <dbReference type="ChEBI" id="CHEBI:58349"/>
        <dbReference type="ChEBI" id="CHEBI:62192"/>
    </reaction>
</comment>
<comment type="subunit">
    <text evidence="1">NDH is composed of at least 16 different subunits, 5 of which are encoded in the nucleus.</text>
</comment>
<comment type="subcellular location">
    <subcellularLocation>
        <location evidence="1">Plastid</location>
        <location evidence="1">Chloroplast thylakoid membrane</location>
        <topology evidence="1">Peripheral membrane protein</topology>
        <orientation evidence="1">Stromal side</orientation>
    </subcellularLocation>
</comment>
<comment type="similarity">
    <text evidence="1">Belongs to the complex I 49 kDa subunit family.</text>
</comment>
<keyword id="KW-0150">Chloroplast</keyword>
<keyword id="KW-0472">Membrane</keyword>
<keyword id="KW-0520">NAD</keyword>
<keyword id="KW-0521">NADP</keyword>
<keyword id="KW-0934">Plastid</keyword>
<keyword id="KW-0618">Plastoquinone</keyword>
<keyword id="KW-0874">Quinone</keyword>
<keyword id="KW-0793">Thylakoid</keyword>
<keyword id="KW-1278">Translocase</keyword>
<keyword id="KW-0813">Transport</keyword>
<accession>A1XG11</accession>
<dbReference type="EC" id="7.1.1.-" evidence="1"/>
<dbReference type="EMBL" id="DQ354691">
    <property type="protein sequence ID" value="ABC60515.1"/>
    <property type="molecule type" value="Genomic_DNA"/>
</dbReference>
<dbReference type="RefSeq" id="YP_001001590.1">
    <property type="nucleotide sequence ID" value="NC_008788.1"/>
</dbReference>
<dbReference type="SMR" id="A1XG11"/>
<dbReference type="GeneID" id="4699615"/>
<dbReference type="GO" id="GO:0009535">
    <property type="term" value="C:chloroplast thylakoid membrane"/>
    <property type="evidence" value="ECO:0007669"/>
    <property type="project" value="UniProtKB-SubCell"/>
</dbReference>
<dbReference type="GO" id="GO:0051287">
    <property type="term" value="F:NAD binding"/>
    <property type="evidence" value="ECO:0007669"/>
    <property type="project" value="InterPro"/>
</dbReference>
<dbReference type="GO" id="GO:0016655">
    <property type="term" value="F:oxidoreductase activity, acting on NAD(P)H, quinone or similar compound as acceptor"/>
    <property type="evidence" value="ECO:0007669"/>
    <property type="project" value="UniProtKB-UniRule"/>
</dbReference>
<dbReference type="GO" id="GO:0048038">
    <property type="term" value="F:quinone binding"/>
    <property type="evidence" value="ECO:0007669"/>
    <property type="project" value="UniProtKB-KW"/>
</dbReference>
<dbReference type="GO" id="GO:0019684">
    <property type="term" value="P:photosynthesis, light reaction"/>
    <property type="evidence" value="ECO:0007669"/>
    <property type="project" value="UniProtKB-UniRule"/>
</dbReference>
<dbReference type="FunFam" id="1.10.645.10:FF:000003">
    <property type="entry name" value="NAD(P)H-quinone oxidoreductase subunit H, chloroplastic"/>
    <property type="match status" value="1"/>
</dbReference>
<dbReference type="Gene3D" id="1.10.645.10">
    <property type="entry name" value="Cytochrome-c3 Hydrogenase, chain B"/>
    <property type="match status" value="1"/>
</dbReference>
<dbReference type="HAMAP" id="MF_01358">
    <property type="entry name" value="NDH1_NuoD"/>
    <property type="match status" value="1"/>
</dbReference>
<dbReference type="InterPro" id="IPR001135">
    <property type="entry name" value="NADH_Q_OxRdtase_suD"/>
</dbReference>
<dbReference type="InterPro" id="IPR014029">
    <property type="entry name" value="NADH_UbQ_OxRdtase_49kDa_CS"/>
</dbReference>
<dbReference type="InterPro" id="IPR022885">
    <property type="entry name" value="NDH1_su_D/H"/>
</dbReference>
<dbReference type="InterPro" id="IPR029014">
    <property type="entry name" value="NiFe-Hase_large"/>
</dbReference>
<dbReference type="NCBIfam" id="NF004739">
    <property type="entry name" value="PRK06075.1"/>
    <property type="match status" value="1"/>
</dbReference>
<dbReference type="NCBIfam" id="NF005649">
    <property type="entry name" value="PRK07415.1"/>
    <property type="match status" value="1"/>
</dbReference>
<dbReference type="PANTHER" id="PTHR11993:SF10">
    <property type="entry name" value="NADH DEHYDROGENASE [UBIQUINONE] IRON-SULFUR PROTEIN 2, MITOCHONDRIAL"/>
    <property type="match status" value="1"/>
</dbReference>
<dbReference type="PANTHER" id="PTHR11993">
    <property type="entry name" value="NADH-UBIQUINONE OXIDOREDUCTASE 49 KDA SUBUNIT"/>
    <property type="match status" value="1"/>
</dbReference>
<dbReference type="Pfam" id="PF00346">
    <property type="entry name" value="Complex1_49kDa"/>
    <property type="match status" value="1"/>
</dbReference>
<dbReference type="SUPFAM" id="SSF56762">
    <property type="entry name" value="HydB/Nqo4-like"/>
    <property type="match status" value="1"/>
</dbReference>
<dbReference type="PROSITE" id="PS00535">
    <property type="entry name" value="COMPLEX1_49K"/>
    <property type="match status" value="1"/>
</dbReference>
<organism>
    <name type="scientific">Nuphar advena</name>
    <name type="common">Common spatterdock</name>
    <name type="synonym">Nuphar lutea subsp. advena</name>
    <dbReference type="NCBI Taxonomy" id="77108"/>
    <lineage>
        <taxon>Eukaryota</taxon>
        <taxon>Viridiplantae</taxon>
        <taxon>Streptophyta</taxon>
        <taxon>Embryophyta</taxon>
        <taxon>Tracheophyta</taxon>
        <taxon>Spermatophyta</taxon>
        <taxon>Magnoliopsida</taxon>
        <taxon>Nymphaeales</taxon>
        <taxon>Nymphaeaceae</taxon>
        <taxon>Nuphar</taxon>
    </lineage>
</organism>
<geneLocation type="chloroplast"/>